<comment type="catalytic activity">
    <reaction evidence="1">
        <text>tRNA(Lys) + L-lysine + ATP = L-lysyl-tRNA(Lys) + AMP + diphosphate</text>
        <dbReference type="Rhea" id="RHEA:20792"/>
        <dbReference type="Rhea" id="RHEA-COMP:9696"/>
        <dbReference type="Rhea" id="RHEA-COMP:9697"/>
        <dbReference type="ChEBI" id="CHEBI:30616"/>
        <dbReference type="ChEBI" id="CHEBI:32551"/>
        <dbReference type="ChEBI" id="CHEBI:33019"/>
        <dbReference type="ChEBI" id="CHEBI:78442"/>
        <dbReference type="ChEBI" id="CHEBI:78529"/>
        <dbReference type="ChEBI" id="CHEBI:456215"/>
        <dbReference type="EC" id="6.1.1.6"/>
    </reaction>
</comment>
<comment type="cofactor">
    <cofactor evidence="1">
        <name>Mg(2+)</name>
        <dbReference type="ChEBI" id="CHEBI:18420"/>
    </cofactor>
    <text evidence="1">Binds 3 Mg(2+) ions per subunit.</text>
</comment>
<comment type="subunit">
    <text evidence="1">Homodimer.</text>
</comment>
<comment type="subcellular location">
    <subcellularLocation>
        <location evidence="1">Cytoplasm</location>
    </subcellularLocation>
</comment>
<comment type="similarity">
    <text evidence="1">Belongs to the class-II aminoacyl-tRNA synthetase family.</text>
</comment>
<sequence>MSEQNPTQAAKQAPQQELNDIMAQRLAKLDAMREKGQAFPNDFRRENISDDLHARYDDKTKEELEELAVEVSIAGRMMMRRIMGKASFATIQDMGGRIQLYVTRDKLPESFYNTEFKKWDLGDIIGAKGVLFKTQTNELSIKVSEIRILTKALRPLPDKFHGLSDTEACYRQRYLDLIANDNSRKTFLLRNKIVNAIRQYLNDRDFMEVETPMLQSIPGGAAAKPFETYHNALSLPMYLRIAPELNLKRLVVGGFERVFEINRSFRNEGVSTRHNPEFTMIEFYQAYADYIDLMNLTEEMLRSIAENVLGSSIVNYGDQVFDFGAAFIRMTMKESVLQYNEGIEASELESMASLKALAARFNVNIKENWGEGKVLTEIFEETTEHKLLQPTFITAYPAEVSPLARRNDQDPSVTDRFEFFVGGRELANGFSELNDSQDQAERFMDQVAQKESGDDEAMFYDADYITALEHGLPPTAGEGIGIDRLVMLFTDSHTIRDVLLFPHMRPQAK</sequence>
<feature type="chain" id="PRO_1000204571" description="Lysine--tRNA ligase">
    <location>
        <begin position="1"/>
        <end position="509"/>
    </location>
</feature>
<feature type="region of interest" description="Disordered" evidence="2">
    <location>
        <begin position="1"/>
        <end position="20"/>
    </location>
</feature>
<feature type="compositionally biased region" description="Polar residues" evidence="2">
    <location>
        <begin position="1"/>
        <end position="18"/>
    </location>
</feature>
<feature type="binding site" evidence="1">
    <location>
        <position position="418"/>
    </location>
    <ligand>
        <name>Mg(2+)</name>
        <dbReference type="ChEBI" id="CHEBI:18420"/>
        <label>1</label>
    </ligand>
</feature>
<feature type="binding site" evidence="1">
    <location>
        <position position="425"/>
    </location>
    <ligand>
        <name>Mg(2+)</name>
        <dbReference type="ChEBI" id="CHEBI:18420"/>
        <label>1</label>
    </ligand>
</feature>
<feature type="binding site" evidence="1">
    <location>
        <position position="425"/>
    </location>
    <ligand>
        <name>Mg(2+)</name>
        <dbReference type="ChEBI" id="CHEBI:18420"/>
        <label>2</label>
    </ligand>
</feature>
<gene>
    <name evidence="1" type="primary">lysS</name>
    <name type="ordered locus">Ping_3428</name>
</gene>
<organism>
    <name type="scientific">Psychromonas ingrahamii (strain DSM 17664 / CCUG 51855 / 37)</name>
    <dbReference type="NCBI Taxonomy" id="357804"/>
    <lineage>
        <taxon>Bacteria</taxon>
        <taxon>Pseudomonadati</taxon>
        <taxon>Pseudomonadota</taxon>
        <taxon>Gammaproteobacteria</taxon>
        <taxon>Alteromonadales</taxon>
        <taxon>Psychromonadaceae</taxon>
        <taxon>Psychromonas</taxon>
    </lineage>
</organism>
<evidence type="ECO:0000255" key="1">
    <source>
        <dbReference type="HAMAP-Rule" id="MF_00252"/>
    </source>
</evidence>
<evidence type="ECO:0000256" key="2">
    <source>
        <dbReference type="SAM" id="MobiDB-lite"/>
    </source>
</evidence>
<keyword id="KW-0030">Aminoacyl-tRNA synthetase</keyword>
<keyword id="KW-0067">ATP-binding</keyword>
<keyword id="KW-0963">Cytoplasm</keyword>
<keyword id="KW-0436">Ligase</keyword>
<keyword id="KW-0460">Magnesium</keyword>
<keyword id="KW-0479">Metal-binding</keyword>
<keyword id="KW-0547">Nucleotide-binding</keyword>
<keyword id="KW-0648">Protein biosynthesis</keyword>
<keyword id="KW-1185">Reference proteome</keyword>
<name>SYK_PSYIN</name>
<accession>A1T047</accession>
<dbReference type="EC" id="6.1.1.6" evidence="1"/>
<dbReference type="EMBL" id="CP000510">
    <property type="protein sequence ID" value="ABM05112.1"/>
    <property type="molecule type" value="Genomic_DNA"/>
</dbReference>
<dbReference type="RefSeq" id="WP_011771664.1">
    <property type="nucleotide sequence ID" value="NC_008709.1"/>
</dbReference>
<dbReference type="SMR" id="A1T047"/>
<dbReference type="STRING" id="357804.Ping_3428"/>
<dbReference type="KEGG" id="pin:Ping_3428"/>
<dbReference type="eggNOG" id="COG1190">
    <property type="taxonomic scope" value="Bacteria"/>
</dbReference>
<dbReference type="HOGENOM" id="CLU_008255_6_0_6"/>
<dbReference type="OrthoDB" id="9802326at2"/>
<dbReference type="Proteomes" id="UP000000639">
    <property type="component" value="Chromosome"/>
</dbReference>
<dbReference type="GO" id="GO:0005829">
    <property type="term" value="C:cytosol"/>
    <property type="evidence" value="ECO:0007669"/>
    <property type="project" value="TreeGrafter"/>
</dbReference>
<dbReference type="GO" id="GO:0005524">
    <property type="term" value="F:ATP binding"/>
    <property type="evidence" value="ECO:0007669"/>
    <property type="project" value="UniProtKB-UniRule"/>
</dbReference>
<dbReference type="GO" id="GO:0004824">
    <property type="term" value="F:lysine-tRNA ligase activity"/>
    <property type="evidence" value="ECO:0007669"/>
    <property type="project" value="UniProtKB-UniRule"/>
</dbReference>
<dbReference type="GO" id="GO:0000287">
    <property type="term" value="F:magnesium ion binding"/>
    <property type="evidence" value="ECO:0007669"/>
    <property type="project" value="UniProtKB-UniRule"/>
</dbReference>
<dbReference type="GO" id="GO:0000049">
    <property type="term" value="F:tRNA binding"/>
    <property type="evidence" value="ECO:0007669"/>
    <property type="project" value="TreeGrafter"/>
</dbReference>
<dbReference type="GO" id="GO:0006430">
    <property type="term" value="P:lysyl-tRNA aminoacylation"/>
    <property type="evidence" value="ECO:0007669"/>
    <property type="project" value="UniProtKB-UniRule"/>
</dbReference>
<dbReference type="CDD" id="cd00775">
    <property type="entry name" value="LysRS_core"/>
    <property type="match status" value="1"/>
</dbReference>
<dbReference type="CDD" id="cd04322">
    <property type="entry name" value="LysRS_N"/>
    <property type="match status" value="1"/>
</dbReference>
<dbReference type="FunFam" id="2.40.50.140:FF:000024">
    <property type="entry name" value="Lysine--tRNA ligase"/>
    <property type="match status" value="1"/>
</dbReference>
<dbReference type="FunFam" id="3.30.930.10:FF:000001">
    <property type="entry name" value="Lysine--tRNA ligase"/>
    <property type="match status" value="1"/>
</dbReference>
<dbReference type="Gene3D" id="3.30.930.10">
    <property type="entry name" value="Bira Bifunctional Protein, Domain 2"/>
    <property type="match status" value="1"/>
</dbReference>
<dbReference type="Gene3D" id="2.40.50.140">
    <property type="entry name" value="Nucleic acid-binding proteins"/>
    <property type="match status" value="1"/>
</dbReference>
<dbReference type="HAMAP" id="MF_00252">
    <property type="entry name" value="Lys_tRNA_synth_class2"/>
    <property type="match status" value="1"/>
</dbReference>
<dbReference type="InterPro" id="IPR004364">
    <property type="entry name" value="Aa-tRNA-synt_II"/>
</dbReference>
<dbReference type="InterPro" id="IPR006195">
    <property type="entry name" value="aa-tRNA-synth_II"/>
</dbReference>
<dbReference type="InterPro" id="IPR045864">
    <property type="entry name" value="aa-tRNA-synth_II/BPL/LPL"/>
</dbReference>
<dbReference type="InterPro" id="IPR002313">
    <property type="entry name" value="Lys-tRNA-ligase_II"/>
</dbReference>
<dbReference type="InterPro" id="IPR044136">
    <property type="entry name" value="Lys-tRNA-ligase_II_N"/>
</dbReference>
<dbReference type="InterPro" id="IPR018149">
    <property type="entry name" value="Lys-tRNA-synth_II_C"/>
</dbReference>
<dbReference type="InterPro" id="IPR012340">
    <property type="entry name" value="NA-bd_OB-fold"/>
</dbReference>
<dbReference type="InterPro" id="IPR004365">
    <property type="entry name" value="NA-bd_OB_tRNA"/>
</dbReference>
<dbReference type="NCBIfam" id="TIGR00499">
    <property type="entry name" value="lysS_bact"/>
    <property type="match status" value="1"/>
</dbReference>
<dbReference type="NCBIfam" id="NF001756">
    <property type="entry name" value="PRK00484.1"/>
    <property type="match status" value="1"/>
</dbReference>
<dbReference type="PANTHER" id="PTHR42918:SF15">
    <property type="entry name" value="LYSINE--TRNA LIGASE, CHLOROPLASTIC_MITOCHONDRIAL"/>
    <property type="match status" value="1"/>
</dbReference>
<dbReference type="PANTHER" id="PTHR42918">
    <property type="entry name" value="LYSYL-TRNA SYNTHETASE"/>
    <property type="match status" value="1"/>
</dbReference>
<dbReference type="Pfam" id="PF00152">
    <property type="entry name" value="tRNA-synt_2"/>
    <property type="match status" value="1"/>
</dbReference>
<dbReference type="Pfam" id="PF01336">
    <property type="entry name" value="tRNA_anti-codon"/>
    <property type="match status" value="1"/>
</dbReference>
<dbReference type="PRINTS" id="PR00982">
    <property type="entry name" value="TRNASYNTHLYS"/>
</dbReference>
<dbReference type="SUPFAM" id="SSF55681">
    <property type="entry name" value="Class II aaRS and biotin synthetases"/>
    <property type="match status" value="1"/>
</dbReference>
<dbReference type="SUPFAM" id="SSF50249">
    <property type="entry name" value="Nucleic acid-binding proteins"/>
    <property type="match status" value="1"/>
</dbReference>
<dbReference type="PROSITE" id="PS50862">
    <property type="entry name" value="AA_TRNA_LIGASE_II"/>
    <property type="match status" value="1"/>
</dbReference>
<proteinExistence type="inferred from homology"/>
<protein>
    <recommendedName>
        <fullName evidence="1">Lysine--tRNA ligase</fullName>
        <ecNumber evidence="1">6.1.1.6</ecNumber>
    </recommendedName>
    <alternativeName>
        <fullName evidence="1">Lysyl-tRNA synthetase</fullName>
        <shortName evidence="1">LysRS</shortName>
    </alternativeName>
</protein>
<reference key="1">
    <citation type="journal article" date="2008" name="BMC Genomics">
        <title>Genomics of an extreme psychrophile, Psychromonas ingrahamii.</title>
        <authorList>
            <person name="Riley M."/>
            <person name="Staley J.T."/>
            <person name="Danchin A."/>
            <person name="Wang T.Z."/>
            <person name="Brettin T.S."/>
            <person name="Hauser L.J."/>
            <person name="Land M.L."/>
            <person name="Thompson L.S."/>
        </authorList>
    </citation>
    <scope>NUCLEOTIDE SEQUENCE [LARGE SCALE GENOMIC DNA]</scope>
    <source>
        <strain>DSM 17664 / CCUG 51855 / 37</strain>
    </source>
</reference>